<gene>
    <name evidence="1" type="primary">zwf</name>
</gene>
<protein>
    <recommendedName>
        <fullName evidence="1">Glucose-6-phosphate 1-dehydrogenase</fullName>
        <shortName evidence="1">G6PD</shortName>
        <ecNumber evidence="2 3 5 6 7">1.1.1.363</ecNumber>
    </recommendedName>
    <alternativeName>
        <fullName evidence="8">Glucose-6-phosphate dehydrogenase (NAD(P)(+))</fullName>
    </alternativeName>
</protein>
<sequence length="486" mass="54441">MVSEIKTLVTFFGGTGDLAKRKLYPSVFNLYKKGYLQKHFAIVGTARQALNDDEFKQLVRDSIKDFTDDQAQAEAFIEHFSYRAHDVTDAASYAVLKEAIEEAADKFDIDGNRIFYMSVAPRFFGTIAKYLKSEGLLADTGYNRLMIEKPFGTSYDTAAELQNDLENAFDDNQLFRIDHYLGKEMVQNIAALRFGNPIFDAAWNKDYIKNVQVTLSEVLGVEERAGYYDTAGALLDMIQNHTMQIVGWLAMEKPESFTDKDIRAAKNAAFNALKIYDEAEVNKYFVRAQYGAGDSADFKPYLEELDVPADSKNNTFIAGELQFDLPRWEGVPFYVRSGKRLAAKQTRVDIVFKAGTFNFGSEQEAQEAVLSIIIDPKGAIELKLNAKSVEDAFNTRTIDLGWTVSDEDKKNTPEPYERMIHDTMNGDGSNFADWNGVSIAWKFVDAISAVYTADKAPLETYKSGSMGPEASDKLLAANGDAWVFKG</sequence>
<keyword id="KW-0002">3D-structure</keyword>
<keyword id="KW-0119">Carbohydrate metabolism</keyword>
<keyword id="KW-0903">Direct protein sequencing</keyword>
<keyword id="KW-0313">Glucose metabolism</keyword>
<keyword id="KW-0520">NAD</keyword>
<keyword id="KW-0521">NADP</keyword>
<keyword id="KW-0560">Oxidoreductase</keyword>
<accession>P11411</accession>
<evidence type="ECO:0000255" key="1">
    <source>
        <dbReference type="HAMAP-Rule" id="MF_00966"/>
    </source>
</evidence>
<evidence type="ECO:0000269" key="2">
    <source>
    </source>
</evidence>
<evidence type="ECO:0000269" key="3">
    <source>
    </source>
</evidence>
<evidence type="ECO:0000269" key="4">
    <source>
    </source>
</evidence>
<evidence type="ECO:0000269" key="5">
    <source>
    </source>
</evidence>
<evidence type="ECO:0000269" key="6">
    <source>
    </source>
</evidence>
<evidence type="ECO:0000269" key="7">
    <source>
    </source>
</evidence>
<evidence type="ECO:0000305" key="8"/>
<evidence type="ECO:0000305" key="9">
    <source>
    </source>
</evidence>
<evidence type="ECO:0007744" key="10">
    <source>
        <dbReference type="PDB" id="1DPG"/>
    </source>
</evidence>
<evidence type="ECO:0007744" key="11">
    <source>
        <dbReference type="PDB" id="1E77"/>
    </source>
</evidence>
<evidence type="ECO:0007744" key="12">
    <source>
        <dbReference type="PDB" id="1E7M"/>
    </source>
</evidence>
<evidence type="ECO:0007744" key="13">
    <source>
        <dbReference type="PDB" id="1E7Y"/>
    </source>
</evidence>
<evidence type="ECO:0007744" key="14">
    <source>
        <dbReference type="PDB" id="1H93"/>
    </source>
</evidence>
<evidence type="ECO:0007744" key="15">
    <source>
        <dbReference type="PDB" id="1H94"/>
    </source>
</evidence>
<evidence type="ECO:0007744" key="16">
    <source>
        <dbReference type="PDB" id="1H9A"/>
    </source>
</evidence>
<evidence type="ECO:0007744" key="17">
    <source>
        <dbReference type="PDB" id="1H9B"/>
    </source>
</evidence>
<evidence type="ECO:0007744" key="18">
    <source>
        <dbReference type="PDB" id="2DPG"/>
    </source>
</evidence>
<evidence type="ECO:0007829" key="19">
    <source>
        <dbReference type="PDB" id="1DPG"/>
    </source>
</evidence>
<evidence type="ECO:0007829" key="20">
    <source>
        <dbReference type="PDB" id="1H94"/>
    </source>
</evidence>
<evidence type="ECO:0007829" key="21">
    <source>
        <dbReference type="PDB" id="1H9A"/>
    </source>
</evidence>
<dbReference type="EC" id="1.1.1.363" evidence="2 3 5 6 7"/>
<dbReference type="EMBL" id="M64446">
    <property type="protein sequence ID" value="AAA25265.1"/>
    <property type="molecule type" value="Genomic_DNA"/>
</dbReference>
<dbReference type="PIR" id="A39864">
    <property type="entry name" value="A39864"/>
</dbReference>
<dbReference type="PDB" id="1DPG">
    <property type="method" value="X-ray"/>
    <property type="resolution" value="2.00 A"/>
    <property type="chains" value="A/B=2-486"/>
</dbReference>
<dbReference type="PDB" id="1E77">
    <property type="method" value="X-ray"/>
    <property type="resolution" value="2.69 A"/>
    <property type="chains" value="A=2-486"/>
</dbReference>
<dbReference type="PDB" id="1E7M">
    <property type="method" value="X-ray"/>
    <property type="resolution" value="2.54 A"/>
    <property type="chains" value="A=2-486"/>
</dbReference>
<dbReference type="PDB" id="1E7Y">
    <property type="method" value="X-ray"/>
    <property type="resolution" value="2.48 A"/>
    <property type="chains" value="A=2-486"/>
</dbReference>
<dbReference type="PDB" id="1H93">
    <property type="method" value="X-ray"/>
    <property type="resolution" value="2.20 A"/>
    <property type="chains" value="A=2-486"/>
</dbReference>
<dbReference type="PDB" id="1H94">
    <property type="method" value="X-ray"/>
    <property type="resolution" value="2.50 A"/>
    <property type="chains" value="A=2-486"/>
</dbReference>
<dbReference type="PDB" id="1H9A">
    <property type="method" value="X-ray"/>
    <property type="resolution" value="2.16 A"/>
    <property type="chains" value="A=2-486"/>
</dbReference>
<dbReference type="PDB" id="1H9B">
    <property type="method" value="X-ray"/>
    <property type="resolution" value="2.40 A"/>
    <property type="chains" value="A=2-486"/>
</dbReference>
<dbReference type="PDB" id="2DPG">
    <property type="method" value="X-ray"/>
    <property type="resolution" value="2.50 A"/>
    <property type="chains" value="A=2-486"/>
</dbReference>
<dbReference type="PDBsum" id="1DPG"/>
<dbReference type="PDBsum" id="1E77"/>
<dbReference type="PDBsum" id="1E7M"/>
<dbReference type="PDBsum" id="1E7Y"/>
<dbReference type="PDBsum" id="1H93"/>
<dbReference type="PDBsum" id="1H94"/>
<dbReference type="PDBsum" id="1H9A"/>
<dbReference type="PDBsum" id="1H9B"/>
<dbReference type="PDBsum" id="2DPG"/>
<dbReference type="SMR" id="P11411"/>
<dbReference type="STRING" id="1245.ARA02_09055"/>
<dbReference type="BindingDB" id="P11411"/>
<dbReference type="ChEMBL" id="CHEMBL1741173"/>
<dbReference type="DrugBank" id="DB04122">
    <property type="generic name" value="beta-D-glucose 6-phosphate"/>
</dbReference>
<dbReference type="DrugBank" id="DB02338">
    <property type="generic name" value="NADPH"/>
</dbReference>
<dbReference type="DrugBank" id="DB03461">
    <property type="generic name" value="Nicotinamide adenine dinucleotide phosphate"/>
</dbReference>
<dbReference type="KEGG" id="ag:AAA25265"/>
<dbReference type="BioCyc" id="MetaCyc:MONOMER-13060"/>
<dbReference type="BRENDA" id="1.1.1.363">
    <property type="organism ID" value="839"/>
</dbReference>
<dbReference type="SABIO-RK" id="P11411"/>
<dbReference type="UniPathway" id="UPA00115">
    <property type="reaction ID" value="UER00408"/>
</dbReference>
<dbReference type="EvolutionaryTrace" id="P11411"/>
<dbReference type="GO" id="GO:0005829">
    <property type="term" value="C:cytosol"/>
    <property type="evidence" value="ECO:0007669"/>
    <property type="project" value="TreeGrafter"/>
</dbReference>
<dbReference type="GO" id="GO:0004345">
    <property type="term" value="F:glucose-6-phosphate dehydrogenase activity"/>
    <property type="evidence" value="ECO:0007669"/>
    <property type="project" value="UniProtKB-UniRule"/>
</dbReference>
<dbReference type="GO" id="GO:0050661">
    <property type="term" value="F:NADP binding"/>
    <property type="evidence" value="ECO:0007669"/>
    <property type="project" value="UniProtKB-UniRule"/>
</dbReference>
<dbReference type="GO" id="GO:0006006">
    <property type="term" value="P:glucose metabolic process"/>
    <property type="evidence" value="ECO:0007669"/>
    <property type="project" value="UniProtKB-KW"/>
</dbReference>
<dbReference type="GO" id="GO:0009051">
    <property type="term" value="P:pentose-phosphate shunt, oxidative branch"/>
    <property type="evidence" value="ECO:0007669"/>
    <property type="project" value="TreeGrafter"/>
</dbReference>
<dbReference type="Gene3D" id="3.30.360.10">
    <property type="entry name" value="Dihydrodipicolinate Reductase, domain 2"/>
    <property type="match status" value="1"/>
</dbReference>
<dbReference type="Gene3D" id="3.40.50.720">
    <property type="entry name" value="NAD(P)-binding Rossmann-like Domain"/>
    <property type="match status" value="1"/>
</dbReference>
<dbReference type="HAMAP" id="MF_00966">
    <property type="entry name" value="G6PD"/>
    <property type="match status" value="1"/>
</dbReference>
<dbReference type="InterPro" id="IPR001282">
    <property type="entry name" value="G6P_DH"/>
</dbReference>
<dbReference type="InterPro" id="IPR019796">
    <property type="entry name" value="G6P_DH_AS"/>
</dbReference>
<dbReference type="InterPro" id="IPR022675">
    <property type="entry name" value="G6P_DH_C"/>
</dbReference>
<dbReference type="InterPro" id="IPR022674">
    <property type="entry name" value="G6P_DH_NAD-bd"/>
</dbReference>
<dbReference type="InterPro" id="IPR036291">
    <property type="entry name" value="NAD(P)-bd_dom_sf"/>
</dbReference>
<dbReference type="NCBIfam" id="TIGR00871">
    <property type="entry name" value="zwf"/>
    <property type="match status" value="1"/>
</dbReference>
<dbReference type="PANTHER" id="PTHR23429:SF0">
    <property type="entry name" value="GLUCOSE-6-PHOSPHATE 1-DEHYDROGENASE"/>
    <property type="match status" value="1"/>
</dbReference>
<dbReference type="PANTHER" id="PTHR23429">
    <property type="entry name" value="GLUCOSE-6-PHOSPHATE 1-DEHYDROGENASE G6PD"/>
    <property type="match status" value="1"/>
</dbReference>
<dbReference type="Pfam" id="PF02781">
    <property type="entry name" value="G6PD_C"/>
    <property type="match status" value="1"/>
</dbReference>
<dbReference type="Pfam" id="PF00479">
    <property type="entry name" value="G6PD_N"/>
    <property type="match status" value="1"/>
</dbReference>
<dbReference type="PIRSF" id="PIRSF000110">
    <property type="entry name" value="G6PD"/>
    <property type="match status" value="1"/>
</dbReference>
<dbReference type="PRINTS" id="PR00079">
    <property type="entry name" value="G6PDHDRGNASE"/>
</dbReference>
<dbReference type="SUPFAM" id="SSF55347">
    <property type="entry name" value="Glyceraldehyde-3-phosphate dehydrogenase-like, C-terminal domain"/>
    <property type="match status" value="1"/>
</dbReference>
<dbReference type="SUPFAM" id="SSF51735">
    <property type="entry name" value="NAD(P)-binding Rossmann-fold domains"/>
    <property type="match status" value="1"/>
</dbReference>
<dbReference type="PROSITE" id="PS00069">
    <property type="entry name" value="G6P_DEHYDROGENASE"/>
    <property type="match status" value="1"/>
</dbReference>
<organism>
    <name type="scientific">Leuconostoc mesenteroides</name>
    <dbReference type="NCBI Taxonomy" id="1245"/>
    <lineage>
        <taxon>Bacteria</taxon>
        <taxon>Bacillati</taxon>
        <taxon>Bacillota</taxon>
        <taxon>Bacilli</taxon>
        <taxon>Lactobacillales</taxon>
        <taxon>Lactobacillaceae</taxon>
        <taxon>Leuconostoc</taxon>
    </lineage>
</organism>
<feature type="initiator methionine" description="Removed">
    <location>
        <position position="1"/>
    </location>
</feature>
<feature type="chain" id="PRO_0000068125" description="Glucose-6-phosphate 1-dehydrogenase">
    <location>
        <begin position="2"/>
        <end position="486"/>
    </location>
</feature>
<feature type="active site" description="Proton acceptor" evidence="1 7">
    <location>
        <position position="241"/>
    </location>
</feature>
<feature type="binding site" evidence="1 2 4 7">
    <location>
        <begin position="13"/>
        <end position="20"/>
    </location>
    <ligand>
        <name>NADP(+)</name>
        <dbReference type="ChEBI" id="CHEBI:58349"/>
    </ligand>
</feature>
<feature type="binding site" evidence="1 2 4 7">
    <location>
        <position position="47"/>
    </location>
    <ligand>
        <name>NADP(+)</name>
        <dbReference type="ChEBI" id="CHEBI:58349"/>
    </ligand>
</feature>
<feature type="binding site" evidence="1 2 4 7">
    <location>
        <begin position="86"/>
        <end position="87"/>
    </location>
    <ligand>
        <name>NADP(+)</name>
        <dbReference type="ChEBI" id="CHEBI:58349"/>
    </ligand>
</feature>
<feature type="binding site" evidence="1 4">
    <location>
        <position position="149"/>
    </location>
    <ligand>
        <name>NADP(+)</name>
        <dbReference type="ChEBI" id="CHEBI:58349"/>
    </ligand>
</feature>
<feature type="binding site" evidence="9">
    <location>
        <position position="179"/>
    </location>
    <ligand>
        <name>substrate</name>
    </ligand>
</feature>
<feature type="binding site" evidence="9">
    <location>
        <position position="183"/>
    </location>
    <ligand>
        <name>substrate</name>
    </ligand>
</feature>
<feature type="binding site" evidence="9">
    <location>
        <position position="217"/>
    </location>
    <ligand>
        <name>substrate</name>
    </ligand>
</feature>
<feature type="binding site" evidence="9">
    <location>
        <position position="236"/>
    </location>
    <ligand>
        <name>substrate</name>
    </ligand>
</feature>
<feature type="binding site" evidence="9">
    <location>
        <position position="339"/>
    </location>
    <ligand>
        <name>substrate</name>
    </ligand>
</feature>
<feature type="binding site" evidence="9">
    <location>
        <position position="344"/>
    </location>
    <ligand>
        <name>substrate</name>
    </ligand>
</feature>
<feature type="mutagenesis site" description="Decreases catalytic efficiency toward glucose 6-phosphate." evidence="3">
    <original>T</original>
    <variation>A</variation>
    <location>
        <position position="15"/>
    </location>
</feature>
<feature type="mutagenesis site" description="Decreases catalytic efficiency toward glucose 6-phosphate (with NAD)." evidence="3">
    <original>T</original>
    <variation>S</variation>
    <location>
        <position position="15"/>
    </location>
</feature>
<feature type="mutagenesis site" description="Almost loss of activity." evidence="3 5">
    <original>K</original>
    <variation>E</variation>
    <location>
        <position position="22"/>
    </location>
</feature>
<feature type="mutagenesis site" description="Strongly decreases catalytic efficiency toward glucose 6-phosphate." evidence="3 5">
    <original>K</original>
    <variation>Q</variation>
    <location>
        <position position="22"/>
    </location>
</feature>
<feature type="mutagenesis site" description="Decreases catalytic efficiency toward glucose 6-phosphate." evidence="3 5">
    <original>K</original>
    <variation>R</variation>
    <location>
        <position position="22"/>
    </location>
</feature>
<feature type="mutagenesis site" description="Decreases catalytic efficiency toward glucose 6-phosphate." evidence="3">
    <original>R</original>
    <variation>A</variation>
    <location>
        <position position="47"/>
    </location>
</feature>
<feature type="mutagenesis site" description="Decreases catalytic efficiency toward glucose 6-phosphate." evidence="3">
    <original>Q</original>
    <variation>A</variation>
    <variation>E</variation>
    <location>
        <position position="48"/>
    </location>
</feature>
<feature type="mutagenesis site" description="Strongly decreases catalytic efficiency toward glucose 6-phosphate." evidence="3">
    <original>P</original>
    <variation>G</variation>
    <variation>V</variation>
    <location>
        <position position="150"/>
    </location>
</feature>
<feature type="mutagenesis site" description="Strongly decreases catalytic efficiency toward glucose 6-phosphate." evidence="7">
    <original>D</original>
    <variation>N</variation>
    <location>
        <position position="178"/>
    </location>
</feature>
<feature type="mutagenesis site" description="Strongly decreases catalytic efficiency toward glucose 6-phosphate." evidence="7">
    <original>H</original>
    <variation>N</variation>
    <location>
        <position position="179"/>
    </location>
</feature>
<feature type="mutagenesis site" description="Decreases catalytic efficiency toward glucose 6-phosphate." evidence="3">
    <original>Y</original>
    <variation>F</variation>
    <location>
        <position position="180"/>
    </location>
</feature>
<feature type="mutagenesis site" description="Strongly decreases catalytic efficiency toward glucose 6-phosphate." evidence="3">
    <original>K</original>
    <variation>Q</variation>
    <variation>R</variation>
    <location>
        <position position="183"/>
    </location>
</feature>
<feature type="mutagenesis site" description="Strongly decreases catalytic efficiency toward glucose 6-phosphate." evidence="7">
    <original>H</original>
    <variation>N</variation>
    <location>
        <position position="241"/>
    </location>
</feature>
<feature type="mutagenesis site" description="Strongly decreases catalytic efficiency toward glucose 6-phosphate." evidence="3">
    <original>K</original>
    <variation>Q</variation>
    <variation>R</variation>
    <location>
        <position position="344"/>
    </location>
</feature>
<feature type="mutagenesis site" description="Strongly decreases catalytic efficiency toward glucose 6-phosphate." evidence="3">
    <original>D</original>
    <variation>Q</variation>
    <location>
        <position position="375"/>
    </location>
</feature>
<feature type="mutagenesis site" description="Decreases catalytic efficiency toward glucose 6-phosphate." evidence="3">
    <original>Y</original>
    <variation>F</variation>
    <location>
        <position position="416"/>
    </location>
</feature>
<feature type="sequence conflict" description="In Ref. 2; AA sequence." evidence="8" ref="2">
    <original>SYD</original>
    <variation>HYI</variation>
    <location>
        <begin position="154"/>
        <end position="156"/>
    </location>
</feature>
<feature type="sequence conflict" description="In Ref. 2; AA sequence." evidence="8" ref="2">
    <original>L</original>
    <variation>F</variation>
    <location>
        <position position="165"/>
    </location>
</feature>
<feature type="strand" evidence="19">
    <location>
        <begin position="7"/>
        <end position="12"/>
    </location>
</feature>
<feature type="turn" evidence="19">
    <location>
        <begin position="13"/>
        <end position="15"/>
    </location>
</feature>
<feature type="helix" evidence="19">
    <location>
        <begin position="17"/>
        <end position="21"/>
    </location>
</feature>
<feature type="helix" evidence="19">
    <location>
        <begin position="23"/>
        <end position="32"/>
    </location>
</feature>
<feature type="strand" evidence="19">
    <location>
        <begin position="38"/>
        <end position="48"/>
    </location>
</feature>
<feature type="helix" evidence="19">
    <location>
        <begin position="52"/>
        <end position="63"/>
    </location>
</feature>
<feature type="helix" evidence="19">
    <location>
        <begin position="64"/>
        <end position="66"/>
    </location>
</feature>
<feature type="helix" evidence="19">
    <location>
        <begin position="70"/>
        <end position="77"/>
    </location>
</feature>
<feature type="strand" evidence="19">
    <location>
        <begin position="80"/>
        <end position="84"/>
    </location>
</feature>
<feature type="helix" evidence="19">
    <location>
        <begin position="92"/>
        <end position="106"/>
    </location>
</feature>
<feature type="strand" evidence="19">
    <location>
        <begin position="113"/>
        <end position="117"/>
    </location>
</feature>
<feature type="helix" evidence="19">
    <location>
        <begin position="121"/>
        <end position="123"/>
    </location>
</feature>
<feature type="helix" evidence="19">
    <location>
        <begin position="124"/>
        <end position="133"/>
    </location>
</feature>
<feature type="strand" evidence="19">
    <location>
        <begin position="139"/>
        <end position="141"/>
    </location>
</feature>
<feature type="strand" evidence="19">
    <location>
        <begin position="143"/>
        <end position="147"/>
    </location>
</feature>
<feature type="helix" evidence="19">
    <location>
        <begin position="155"/>
        <end position="165"/>
    </location>
</feature>
<feature type="turn" evidence="19">
    <location>
        <begin position="166"/>
        <end position="168"/>
    </location>
</feature>
<feature type="helix" evidence="19">
    <location>
        <begin position="171"/>
        <end position="173"/>
    </location>
</feature>
<feature type="strand" evidence="19">
    <location>
        <begin position="174"/>
        <end position="176"/>
    </location>
</feature>
<feature type="helix" evidence="19">
    <location>
        <begin position="179"/>
        <end position="182"/>
    </location>
</feature>
<feature type="helix" evidence="19">
    <location>
        <begin position="184"/>
        <end position="188"/>
    </location>
</feature>
<feature type="helix" evidence="19">
    <location>
        <begin position="189"/>
        <end position="194"/>
    </location>
</feature>
<feature type="helix" evidence="19">
    <location>
        <begin position="197"/>
        <end position="200"/>
    </location>
</feature>
<feature type="turn" evidence="19">
    <location>
        <begin position="205"/>
        <end position="207"/>
    </location>
</feature>
<feature type="strand" evidence="19">
    <location>
        <begin position="208"/>
        <end position="216"/>
    </location>
</feature>
<feature type="helix" evidence="21">
    <location>
        <begin position="222"/>
        <end position="224"/>
    </location>
</feature>
<feature type="helix" evidence="19">
    <location>
        <begin position="225"/>
        <end position="236"/>
    </location>
</feature>
<feature type="turn" evidence="19">
    <location>
        <begin position="237"/>
        <end position="240"/>
    </location>
</feature>
<feature type="helix" evidence="19">
    <location>
        <begin position="241"/>
        <end position="250"/>
    </location>
</feature>
<feature type="strand" evidence="19">
    <location>
        <begin position="255"/>
        <end position="258"/>
    </location>
</feature>
<feature type="helix" evidence="19">
    <location>
        <begin position="259"/>
        <end position="270"/>
    </location>
</feature>
<feature type="helix" evidence="19">
    <location>
        <begin position="278"/>
        <end position="284"/>
    </location>
</feature>
<feature type="strand" evidence="19">
    <location>
        <begin position="285"/>
        <end position="290"/>
    </location>
</feature>
<feature type="strand" evidence="21">
    <location>
        <begin position="294"/>
        <end position="298"/>
    </location>
</feature>
<feature type="helix" evidence="19">
    <location>
        <begin position="301"/>
        <end position="303"/>
    </location>
</feature>
<feature type="strand" evidence="19">
    <location>
        <begin position="315"/>
        <end position="321"/>
    </location>
</feature>
<feature type="helix" evidence="19">
    <location>
        <begin position="326"/>
        <end position="328"/>
    </location>
</feature>
<feature type="strand" evidence="19">
    <location>
        <begin position="333"/>
        <end position="343"/>
    </location>
</feature>
<feature type="strand" evidence="19">
    <location>
        <begin position="345"/>
        <end position="352"/>
    </location>
</feature>
<feature type="strand" evidence="19">
    <location>
        <begin position="361"/>
        <end position="363"/>
    </location>
</feature>
<feature type="strand" evidence="19">
    <location>
        <begin position="369"/>
        <end position="377"/>
    </location>
</feature>
<feature type="strand" evidence="19">
    <location>
        <begin position="379"/>
        <end position="387"/>
    </location>
</feature>
<feature type="strand" evidence="19">
    <location>
        <begin position="389"/>
        <end position="392"/>
    </location>
</feature>
<feature type="strand" evidence="19">
    <location>
        <begin position="395"/>
        <end position="403"/>
    </location>
</feature>
<feature type="helix" evidence="19">
    <location>
        <begin position="406"/>
        <end position="411"/>
    </location>
</feature>
<feature type="helix" evidence="19">
    <location>
        <begin position="415"/>
        <end position="425"/>
    </location>
</feature>
<feature type="helix" evidence="20">
    <location>
        <begin position="428"/>
        <end position="430"/>
    </location>
</feature>
<feature type="helix" evidence="19">
    <location>
        <begin position="434"/>
        <end position="452"/>
    </location>
</feature>
<feature type="strand" evidence="19">
    <location>
        <begin position="459"/>
        <end position="461"/>
    </location>
</feature>
<feature type="strand" evidence="19">
    <location>
        <begin position="465"/>
        <end position="467"/>
    </location>
</feature>
<feature type="helix" evidence="19">
    <location>
        <begin position="469"/>
        <end position="476"/>
    </location>
</feature>
<feature type="turn" evidence="19">
    <location>
        <begin position="477"/>
        <end position="479"/>
    </location>
</feature>
<proteinExistence type="evidence at protein level"/>
<comment type="function">
    <text evidence="1 3 5 6 7">Catalyzes the oxidation of glucose 6-phosphate to 6-phosphogluconolactone. Can utilize either NADP(+) or NAD(+).</text>
</comment>
<comment type="catalytic activity">
    <reaction evidence="2 3 5 6 7">
        <text>D-glucose 6-phosphate + NAD(+) = 6-phospho-D-glucono-1,5-lactone + NADH + H(+)</text>
        <dbReference type="Rhea" id="RHEA:38215"/>
        <dbReference type="ChEBI" id="CHEBI:15378"/>
        <dbReference type="ChEBI" id="CHEBI:57540"/>
        <dbReference type="ChEBI" id="CHEBI:57945"/>
        <dbReference type="ChEBI" id="CHEBI:57955"/>
        <dbReference type="ChEBI" id="CHEBI:61548"/>
        <dbReference type="EC" id="1.1.1.363"/>
    </reaction>
</comment>
<comment type="catalytic activity">
    <reaction evidence="2 3 5 6 7">
        <text>D-glucose 6-phosphate + NADP(+) = 6-phospho-D-glucono-1,5-lactone + NADPH + H(+)</text>
        <dbReference type="Rhea" id="RHEA:15841"/>
        <dbReference type="ChEBI" id="CHEBI:15378"/>
        <dbReference type="ChEBI" id="CHEBI:57783"/>
        <dbReference type="ChEBI" id="CHEBI:57955"/>
        <dbReference type="ChEBI" id="CHEBI:58349"/>
        <dbReference type="ChEBI" id="CHEBI:61548"/>
        <dbReference type="EC" id="1.1.1.363"/>
    </reaction>
</comment>
<comment type="biophysicochemical properties">
    <kinetics>
        <KM evidence="2 7">114 uM for glucose 6-phosphate (with NADP)</KM>
        <KM evidence="2 7">69 uM for glucose 6-phosphate (with NAD)</KM>
        <KM evidence="2 7">8 uM for NADP</KM>
        <KM evidence="2 7">160 uM for NAD</KM>
    </kinetics>
    <phDependence>
        <text evidence="2 7">Optimum pH is 5.4-8.9.</text>
    </phDependence>
</comment>
<comment type="pathway">
    <text evidence="1">Carbohydrate degradation; pentose phosphate pathway; D-ribulose 5-phosphate from D-glucose 6-phosphate (oxidative stage): step 1/3.</text>
</comment>
<comment type="subunit">
    <text evidence="2 7">Homodimer.</text>
</comment>
<comment type="similarity">
    <text evidence="1">Belongs to the glucose-6-phosphate dehydrogenase family.</text>
</comment>
<reference key="1">
    <citation type="journal article" date="1991" name="J. Biol. Chem.">
        <title>Cloning of the gene and amino acid sequence for glucose 6-phosphate dehydrogenase from Leuconostoc mesenteroides.</title>
        <authorList>
            <person name="Lee W.T."/>
            <person name="Flynn T.G."/>
            <person name="Lyons C."/>
            <person name="Levy H.R."/>
        </authorList>
    </citation>
    <scope>NUCLEOTIDE SEQUENCE [GENOMIC DNA]</scope>
    <source>
        <strain>ATCC 12291</strain>
    </source>
</reference>
<reference key="2">
    <citation type="journal article" date="1987" name="FEBS Lett.">
        <title>Sequence identity between a lysine-containing peptide from Leuconostoc mesenteroides glucose-6-phosphate dehydrogenase and an active site peptide from human erythrocyte glucose-6-phosphate dehydrogenase.</title>
        <authorList>
            <person name="Bhadbhade M.M."/>
            <person name="Adams M.J."/>
            <person name="Flynn T.G."/>
            <person name="Levy H.R."/>
        </authorList>
    </citation>
    <scope>PROTEIN SEQUENCE OF 147-188</scope>
</reference>
<reference key="3">
    <citation type="journal article" date="1971" name="J. Biol. Chem.">
        <title>Glucose 6-phosphate dehydrogenase from Leuconostoc mesenteroides. Kinetic studies.</title>
        <authorList>
            <person name="Olive C."/>
            <person name="Geroch M.E."/>
            <person name="Levy H.R."/>
        </authorList>
    </citation>
    <scope>FUNCTION</scope>
    <scope>CATALYTIC ACTIVITY</scope>
</reference>
<reference key="4">
    <citation type="journal article" date="1992" name="Protein Sci.">
        <title>Lysine-21 of Leuconostoc mesenteroides glucose 6-phosphate dehydrogenase participates in substrate binding through charge-charge interaction.</title>
        <authorList>
            <person name="Lee W.T."/>
            <person name="Levy H.R."/>
        </authorList>
    </citation>
    <scope>FUNCTION</scope>
    <scope>CATALYTIC ACTIVITY</scope>
    <scope>MUTAGENESIS OF LYS-22</scope>
</reference>
<reference key="5">
    <citation type="journal article" date="2000" name="Biochemistry">
        <title>Delineation of the roles of amino acids involved in the catalytic functions of Leuconostoc mesenteroides glucose 6-phosphate dehydrogenase.</title>
        <authorList>
            <person name="Vought V."/>
            <person name="Ciccone T."/>
            <person name="Davino M.H."/>
            <person name="Fairbairn L."/>
            <person name="Lin Y."/>
            <person name="Cosgrove M.S."/>
            <person name="Adams M.J."/>
            <person name="Levy H.R."/>
        </authorList>
    </citation>
    <scope>FUNCTION</scope>
    <scope>CATALYTIC ACTIVITY</scope>
    <scope>MUTAGENESIS OF THR-15; LYS-22; ARG-47; GLN-48; PRO-150; TYR-180; LYS-183; LYS-344; ASP-375 AND TYR-416</scope>
</reference>
<reference evidence="10" key="6">
    <citation type="journal article" date="1994" name="Structure">
        <title>The three-dimensional structure of glucose 6-phosphate dehydrogenase from Leuconostoc mesenteroides refined at 2.0-A resolution.</title>
        <authorList>
            <person name="Rowland P."/>
            <person name="Basak A.K."/>
            <person name="Gover S."/>
            <person name="Levy H.R."/>
            <person name="Adams M.J."/>
        </authorList>
    </citation>
    <scope>X-RAY CRYSTALLOGRAPHY (2.0 ANGSTROMS)</scope>
</reference>
<reference evidence="18" key="7">
    <citation type="journal article" date="1998" name="Biochemistry">
        <title>On the mechanism of the reaction catalyzed by glucose 6-phosphate dehydrogenase.</title>
        <authorList>
            <person name="Cosgrove M.S."/>
            <person name="Naylor C."/>
            <person name="Paludan S."/>
            <person name="Adams M.J."/>
            <person name="Levy H.R."/>
        </authorList>
    </citation>
    <scope>X-RAY CRYSTALLOGRAPHY (2.5 ANGSTROMS) OF MUTANT ASN-241 IN COMPLEX WITH NADP</scope>
    <scope>FUNCTION</scope>
    <scope>CATALYTIC ACTIVITY</scope>
    <scope>BIOPHYSICOCHEMICAL PROPERTIES</scope>
    <scope>ACTIVE SITE</scope>
    <scope>MUTAGENESIS OF ASP-178; HIS-179 AND HIS-241</scope>
</reference>
<reference evidence="11 12 13" key="8">
    <citation type="journal article" date="2000" name="Biochemistry">
        <title>An examination of the role of Asp-177 in the His-Asp catalytic dyad of Leuconostoc mesenteroides glucose 6-phosphate dehydrogenase: X-ray structure and pH dependence of kinetic parameters of the D177N mutant enzyme.</title>
        <authorList>
            <person name="Cosgrove M.S."/>
            <person name="Gover S."/>
            <person name="Naylor C.E."/>
            <person name="Vandeputte-Rutten L."/>
            <person name="Adams M.J."/>
            <person name="Levy H.R."/>
        </authorList>
    </citation>
    <scope>X-RAY CRYSTALLOGRAPHY (2.3 ANGSTROMS) OF MUTANTS ASN-178 AND CYS-366 IN COMPLEXES WITH NAD; NADP AND GLUCOSE 6-PHOSPHATE</scope>
    <scope>CATALYTIC ACTIVITY</scope>
    <scope>BIOPHYSICOCHEMICAL PROPERTIES</scope>
    <scope>SUBUNIT</scope>
</reference>
<reference evidence="14 15 16 17" key="9">
    <citation type="journal article" date="2001" name="Acta Crystallogr. D">
        <title>NADP+ and NAD+ binding to the dual coenzyme specific enzyme Leuconostoc mesenteroides glucose 6-phosphate dehydrogenase: different interdomain hinge angles are seen in different binary and ternary complexes.</title>
        <authorList>
            <person name="Naylor C.E."/>
            <person name="Gover S."/>
            <person name="Basak A.K."/>
            <person name="Cosgrove M.S."/>
            <person name="Levy H.R."/>
            <person name="Adams M.J."/>
        </authorList>
    </citation>
    <scope>X-RAY CRYSTALLOGRAPHY (2.16 ANGSTROMS) IN COMPLEXES WITH NAD AND NADP</scope>
</reference>
<name>G6PD_LEUME</name>